<accession>P0DE77</accession>
<accession>P58124</accession>
<accession>P66447</accession>
<reference key="1">
    <citation type="journal article" date="2003" name="Genome Res.">
        <title>Genome sequence of an M3 strain of Streptococcus pyogenes reveals a large-scale genomic rearrangement in invasive strains and new insights into phage evolution.</title>
        <authorList>
            <person name="Nakagawa I."/>
            <person name="Kurokawa K."/>
            <person name="Yamashita A."/>
            <person name="Nakata M."/>
            <person name="Tomiyasu Y."/>
            <person name="Okahashi N."/>
            <person name="Kawabata S."/>
            <person name="Yamazaki K."/>
            <person name="Shiba T."/>
            <person name="Yasunaga T."/>
            <person name="Hayashi H."/>
            <person name="Hattori M."/>
            <person name="Hamada S."/>
        </authorList>
    </citation>
    <scope>NUCLEOTIDE SEQUENCE [LARGE SCALE GENOMIC DNA]</scope>
    <source>
        <strain>SSI-1</strain>
    </source>
</reference>
<proteinExistence type="inferred from homology"/>
<name>RS16_STRPQ</name>
<keyword id="KW-0687">Ribonucleoprotein</keyword>
<keyword id="KW-0689">Ribosomal protein</keyword>
<dbReference type="EMBL" id="BA000034">
    <property type="protein sequence ID" value="BAC64382.1"/>
    <property type="molecule type" value="Genomic_DNA"/>
</dbReference>
<dbReference type="RefSeq" id="WP_002985074.1">
    <property type="nucleotide sequence ID" value="NC_004606.1"/>
</dbReference>
<dbReference type="SMR" id="P0DE77"/>
<dbReference type="KEGG" id="sps:SPs1287"/>
<dbReference type="HOGENOM" id="CLU_100590_5_0_9"/>
<dbReference type="GO" id="GO:0005737">
    <property type="term" value="C:cytoplasm"/>
    <property type="evidence" value="ECO:0007669"/>
    <property type="project" value="UniProtKB-ARBA"/>
</dbReference>
<dbReference type="GO" id="GO:0015935">
    <property type="term" value="C:small ribosomal subunit"/>
    <property type="evidence" value="ECO:0007669"/>
    <property type="project" value="TreeGrafter"/>
</dbReference>
<dbReference type="GO" id="GO:0003735">
    <property type="term" value="F:structural constituent of ribosome"/>
    <property type="evidence" value="ECO:0007669"/>
    <property type="project" value="InterPro"/>
</dbReference>
<dbReference type="GO" id="GO:0006412">
    <property type="term" value="P:translation"/>
    <property type="evidence" value="ECO:0007669"/>
    <property type="project" value="UniProtKB-UniRule"/>
</dbReference>
<dbReference type="FunFam" id="3.30.1320.10:FF:000002">
    <property type="entry name" value="30S ribosomal protein S16"/>
    <property type="match status" value="1"/>
</dbReference>
<dbReference type="Gene3D" id="3.30.1320.10">
    <property type="match status" value="1"/>
</dbReference>
<dbReference type="HAMAP" id="MF_00385">
    <property type="entry name" value="Ribosomal_bS16"/>
    <property type="match status" value="1"/>
</dbReference>
<dbReference type="InterPro" id="IPR000307">
    <property type="entry name" value="Ribosomal_bS16"/>
</dbReference>
<dbReference type="InterPro" id="IPR023803">
    <property type="entry name" value="Ribosomal_bS16_dom_sf"/>
</dbReference>
<dbReference type="NCBIfam" id="TIGR00002">
    <property type="entry name" value="S16"/>
    <property type="match status" value="1"/>
</dbReference>
<dbReference type="PANTHER" id="PTHR12919">
    <property type="entry name" value="30S RIBOSOMAL PROTEIN S16"/>
    <property type="match status" value="1"/>
</dbReference>
<dbReference type="PANTHER" id="PTHR12919:SF20">
    <property type="entry name" value="SMALL RIBOSOMAL SUBUNIT PROTEIN BS16M"/>
    <property type="match status" value="1"/>
</dbReference>
<dbReference type="Pfam" id="PF00886">
    <property type="entry name" value="Ribosomal_S16"/>
    <property type="match status" value="1"/>
</dbReference>
<dbReference type="SUPFAM" id="SSF54565">
    <property type="entry name" value="Ribosomal protein S16"/>
    <property type="match status" value="1"/>
</dbReference>
<sequence>MAVKIRLTRMGSKKKPFYRINVADSRAPRDGRFIETVGTYNPLVAENQITIKEDRVLEWLSKGAQPSDTVRNILSKAGVMAKFHDQKFSK</sequence>
<gene>
    <name evidence="1" type="primary">rpsP</name>
    <name type="ordered locus">SPs1287</name>
</gene>
<organism>
    <name type="scientific">Streptococcus pyogenes serotype M3 (strain SSI-1)</name>
    <dbReference type="NCBI Taxonomy" id="193567"/>
    <lineage>
        <taxon>Bacteria</taxon>
        <taxon>Bacillati</taxon>
        <taxon>Bacillota</taxon>
        <taxon>Bacilli</taxon>
        <taxon>Lactobacillales</taxon>
        <taxon>Streptococcaceae</taxon>
        <taxon>Streptococcus</taxon>
    </lineage>
</organism>
<evidence type="ECO:0000255" key="1">
    <source>
        <dbReference type="HAMAP-Rule" id="MF_00385"/>
    </source>
</evidence>
<evidence type="ECO:0000305" key="2"/>
<comment type="similarity">
    <text evidence="1">Belongs to the bacterial ribosomal protein bS16 family.</text>
</comment>
<protein>
    <recommendedName>
        <fullName evidence="1">Small ribosomal subunit protein bS16</fullName>
    </recommendedName>
    <alternativeName>
        <fullName evidence="2">30S ribosomal protein S16</fullName>
    </alternativeName>
</protein>
<feature type="chain" id="PRO_0000411528" description="Small ribosomal subunit protein bS16">
    <location>
        <begin position="1"/>
        <end position="90"/>
    </location>
</feature>